<proteinExistence type="evidence at protein level"/>
<name>HBA_PALPA</name>
<organism>
    <name type="scientific">Paleosuchus palpebrosus</name>
    <name type="common">Cuvier's smooth-fronted caiman</name>
    <name type="synonym">Dwarf caiman</name>
    <dbReference type="NCBI Taxonomy" id="84099"/>
    <lineage>
        <taxon>Eukaryota</taxon>
        <taxon>Metazoa</taxon>
        <taxon>Chordata</taxon>
        <taxon>Craniata</taxon>
        <taxon>Vertebrata</taxon>
        <taxon>Euteleostomi</taxon>
        <taxon>Archelosauria</taxon>
        <taxon>Archosauria</taxon>
        <taxon>Crocodylia</taxon>
        <taxon>Alligatoridae</taxon>
        <taxon>Caimaninae</taxon>
        <taxon>Paleosuchus</taxon>
    </lineage>
</organism>
<sequence>VLSEADKSNVKGIWSKACCHLEDYGAETLERLFFVYPQTKIYFPHFDLTHNSAQIRGHGKKVFLALHDAVNHIDDLSGALSRLSDLHAHNLRVDPVNFKLLSQCVLVVFGVHHPGALTPEVHASLDKFLCAVSTVLTSKYR</sequence>
<reference evidence="5" key="1">
    <citation type="journal article" date="2013" name="Am. J. Physiol.">
        <title>Lack of conventional oxygen-linked proton and anion binding sites does not impair allosteric regulation of oxygen binding in dwarf caiman hemoglobin.</title>
        <authorList>
            <person name="Weber R.E."/>
            <person name="Fago A."/>
            <person name="Malte H."/>
            <person name="Storz J.F."/>
            <person name="Gorr T.A."/>
        </authorList>
    </citation>
    <scope>PROTEIN SEQUENCE</scope>
    <scope>SUBUNIT</scope>
    <source>
        <tissue evidence="3">Erythrocyte</tissue>
    </source>
</reference>
<gene>
    <name evidence="1" type="primary">HBA</name>
</gene>
<keyword id="KW-0903">Direct protein sequencing</keyword>
<keyword id="KW-0349">Heme</keyword>
<keyword id="KW-0408">Iron</keyword>
<keyword id="KW-0479">Metal-binding</keyword>
<keyword id="KW-0561">Oxygen transport</keyword>
<keyword id="KW-0813">Transport</keyword>
<evidence type="ECO:0000250" key="1">
    <source>
        <dbReference type="UniProtKB" id="P01966"/>
    </source>
</evidence>
<evidence type="ECO:0000255" key="2">
    <source>
        <dbReference type="PROSITE-ProRule" id="PRU00238"/>
    </source>
</evidence>
<evidence type="ECO:0000269" key="3">
    <source>
    </source>
</evidence>
<evidence type="ECO:0000303" key="4">
    <source>
    </source>
</evidence>
<evidence type="ECO:0000305" key="5"/>
<dbReference type="SMR" id="C0HJE0"/>
<dbReference type="GO" id="GO:0072562">
    <property type="term" value="C:blood microparticle"/>
    <property type="evidence" value="ECO:0007669"/>
    <property type="project" value="TreeGrafter"/>
</dbReference>
<dbReference type="GO" id="GO:0031838">
    <property type="term" value="C:haptoglobin-hemoglobin complex"/>
    <property type="evidence" value="ECO:0007669"/>
    <property type="project" value="TreeGrafter"/>
</dbReference>
<dbReference type="GO" id="GO:0005833">
    <property type="term" value="C:hemoglobin complex"/>
    <property type="evidence" value="ECO:0007669"/>
    <property type="project" value="InterPro"/>
</dbReference>
<dbReference type="GO" id="GO:0031720">
    <property type="term" value="F:haptoglobin binding"/>
    <property type="evidence" value="ECO:0007669"/>
    <property type="project" value="TreeGrafter"/>
</dbReference>
<dbReference type="GO" id="GO:0020037">
    <property type="term" value="F:heme binding"/>
    <property type="evidence" value="ECO:0007669"/>
    <property type="project" value="InterPro"/>
</dbReference>
<dbReference type="GO" id="GO:0005506">
    <property type="term" value="F:iron ion binding"/>
    <property type="evidence" value="ECO:0007669"/>
    <property type="project" value="InterPro"/>
</dbReference>
<dbReference type="GO" id="GO:0043177">
    <property type="term" value="F:organic acid binding"/>
    <property type="evidence" value="ECO:0007669"/>
    <property type="project" value="TreeGrafter"/>
</dbReference>
<dbReference type="GO" id="GO:0019825">
    <property type="term" value="F:oxygen binding"/>
    <property type="evidence" value="ECO:0007669"/>
    <property type="project" value="InterPro"/>
</dbReference>
<dbReference type="GO" id="GO:0005344">
    <property type="term" value="F:oxygen carrier activity"/>
    <property type="evidence" value="ECO:0007669"/>
    <property type="project" value="UniProtKB-KW"/>
</dbReference>
<dbReference type="GO" id="GO:0004601">
    <property type="term" value="F:peroxidase activity"/>
    <property type="evidence" value="ECO:0007669"/>
    <property type="project" value="TreeGrafter"/>
</dbReference>
<dbReference type="GO" id="GO:0042744">
    <property type="term" value="P:hydrogen peroxide catabolic process"/>
    <property type="evidence" value="ECO:0007669"/>
    <property type="project" value="TreeGrafter"/>
</dbReference>
<dbReference type="CDD" id="cd08927">
    <property type="entry name" value="Hb-alpha-like"/>
    <property type="match status" value="1"/>
</dbReference>
<dbReference type="FunFam" id="1.10.490.10:FF:000002">
    <property type="entry name" value="Hemoglobin subunit alpha"/>
    <property type="match status" value="1"/>
</dbReference>
<dbReference type="Gene3D" id="1.10.490.10">
    <property type="entry name" value="Globins"/>
    <property type="match status" value="1"/>
</dbReference>
<dbReference type="InterPro" id="IPR000971">
    <property type="entry name" value="Globin"/>
</dbReference>
<dbReference type="InterPro" id="IPR009050">
    <property type="entry name" value="Globin-like_sf"/>
</dbReference>
<dbReference type="InterPro" id="IPR012292">
    <property type="entry name" value="Globin/Proto"/>
</dbReference>
<dbReference type="InterPro" id="IPR002338">
    <property type="entry name" value="Hemoglobin_a-typ"/>
</dbReference>
<dbReference type="InterPro" id="IPR050056">
    <property type="entry name" value="Hemoglobin_oxygen_transport"/>
</dbReference>
<dbReference type="InterPro" id="IPR002339">
    <property type="entry name" value="Hemoglobin_pi"/>
</dbReference>
<dbReference type="PANTHER" id="PTHR11442">
    <property type="entry name" value="HEMOGLOBIN FAMILY MEMBER"/>
    <property type="match status" value="1"/>
</dbReference>
<dbReference type="PANTHER" id="PTHR11442:SF48">
    <property type="entry name" value="HEMOGLOBIN SUBUNIT ALPHA"/>
    <property type="match status" value="1"/>
</dbReference>
<dbReference type="Pfam" id="PF00042">
    <property type="entry name" value="Globin"/>
    <property type="match status" value="1"/>
</dbReference>
<dbReference type="PRINTS" id="PR00612">
    <property type="entry name" value="ALPHAHAEM"/>
</dbReference>
<dbReference type="PRINTS" id="PR00815">
    <property type="entry name" value="PIHAEM"/>
</dbReference>
<dbReference type="SUPFAM" id="SSF46458">
    <property type="entry name" value="Globin-like"/>
    <property type="match status" value="1"/>
</dbReference>
<dbReference type="PROSITE" id="PS01033">
    <property type="entry name" value="GLOBIN"/>
    <property type="match status" value="1"/>
</dbReference>
<comment type="function">
    <text evidence="5">Involved in oxygen transport from the lung to the various peripheral tissues.</text>
</comment>
<comment type="subunit">
    <text evidence="3">Heterotetramer of two alpha chains and two beta chains. When oxygenated in vitro, exists virtually only in polymeric form. When deoxygenated, forms tetramers, octamers and larger polymers.</text>
</comment>
<comment type="tissue specificity">
    <text evidence="5">Red blood cells.</text>
</comment>
<comment type="miscellaneous">
    <text evidence="3">Displays a pronounced Bohr effect despite the lack of the His at position 146 conserved in the beta subunit in most other vertebrates. Shows chloride-dependent sensitivity to organophosphates like ATP and 2,3-diphosphoglycerate (DPG) but not to inositol hexaphosphate (IHP). Binds molecular CO(2), not bicarbonate as reported for other crocodilians.</text>
</comment>
<comment type="similarity">
    <text evidence="2">Belongs to the globin family.</text>
</comment>
<protein>
    <recommendedName>
        <fullName evidence="4">Hemoglobin subunit alpha</fullName>
    </recommendedName>
    <alternativeName>
        <fullName evidence="1">Alpha-globin</fullName>
    </alternativeName>
    <alternativeName>
        <fullName evidence="1">Hemoglobin alpha chain</fullName>
    </alternativeName>
</protein>
<accession>C0HJE0</accession>
<feature type="chain" id="PRO_0000424533" description="Hemoglobin subunit alpha">
    <location>
        <begin position="1"/>
        <end position="141"/>
    </location>
</feature>
<feature type="domain" description="Globin" evidence="2">
    <location>
        <begin position="1"/>
        <end position="141"/>
    </location>
</feature>
<feature type="binding site" evidence="2">
    <location>
        <position position="58"/>
    </location>
    <ligand>
        <name>O2</name>
        <dbReference type="ChEBI" id="CHEBI:15379"/>
    </ligand>
</feature>
<feature type="binding site" description="proximal binding residue" evidence="2">
    <location>
        <position position="87"/>
    </location>
    <ligand>
        <name>heme b</name>
        <dbReference type="ChEBI" id="CHEBI:60344"/>
    </ligand>
    <ligandPart>
        <name>Fe</name>
        <dbReference type="ChEBI" id="CHEBI:18248"/>
    </ligandPart>
</feature>